<comment type="function">
    <text evidence="3">Probable RNA demethylase that binds to both N6-methyladenosine-containing- (m(6)A) and C5-methylcytidine-containing- (m(5)C) RNAs, thus being a probable m(6)A and m(5)C eraser (PubMed:32933187). Involved in responses to abscisic acid (ABA) via the modulation of the expression of ABA signaling-related genes (e.g. ABI3 and ABI4) (PubMed:32933187). Acts as a negative regulator during seed germination under abiotic stresses (e.g. salt, cold and ABA) (PubMed:32933187). Positive modulator of seedling growth and survival in response to drought and heat, but counteracts tolerance to salt (PubMed:32933187).</text>
</comment>
<comment type="cofactor">
    <cofactor evidence="2">
        <name>Fe(2+)</name>
        <dbReference type="ChEBI" id="CHEBI:29033"/>
    </cofactor>
    <text evidence="2">Binds 1 Fe(2+) ion per subunit.</text>
</comment>
<comment type="subcellular location">
    <subcellularLocation>
        <location evidence="3">Nucleus</location>
    </subcellularLocation>
</comment>
<comment type="induction">
    <text evidence="3">Accumulates under a salt stress (PubMed:32933187). Reduced levels during cold stress (PubMed:32933187). Seems not influenced by heat, drought and abscisic acid (ABA) (PubMed:32933187).</text>
</comment>
<comment type="disruption phenotype">
    <text evidence="3">Faster germination of seeds under cold, salt and abscisic acid (ABA) treatment conditions, but not upon dehydration stress (PubMed:32933187). Reduced survival rate under drought and heat stresses, but increased resistance to salt (PubMed:32933187). Enhanced cotyledon greening after ABA application associated with reduced transcript levels of ABA signaling-related genes (e.g. ABI3 and ABI4) (PubMed:32933187).</text>
</comment>
<comment type="similarity">
    <text evidence="5">Belongs to the alkB family.</text>
</comment>
<comment type="sequence caution" evidence="5">
    <conflict type="erroneous initiation">
        <sequence resource="EMBL-CDS" id="AAK60327"/>
    </conflict>
    <text>Truncated N-terminus.</text>
</comment>
<comment type="sequence caution" evidence="5">
    <conflict type="erroneous gene model prediction">
        <sequence resource="EMBL-CDS" id="ANM66930"/>
    </conflict>
</comment>
<name>ALKB6_ARATH</name>
<reference key="1">
    <citation type="journal article" date="1999" name="Nature">
        <title>Sequence and analysis of chromosome 4 of the plant Arabidopsis thaliana.</title>
        <authorList>
            <person name="Mayer K.F.X."/>
            <person name="Schueller C."/>
            <person name="Wambutt R."/>
            <person name="Murphy G."/>
            <person name="Volckaert G."/>
            <person name="Pohl T."/>
            <person name="Duesterhoeft A."/>
            <person name="Stiekema W."/>
            <person name="Entian K.-D."/>
            <person name="Terryn N."/>
            <person name="Harris B."/>
            <person name="Ansorge W."/>
            <person name="Brandt P."/>
            <person name="Grivell L.A."/>
            <person name="Rieger M."/>
            <person name="Weichselgartner M."/>
            <person name="de Simone V."/>
            <person name="Obermaier B."/>
            <person name="Mache R."/>
            <person name="Mueller M."/>
            <person name="Kreis M."/>
            <person name="Delseny M."/>
            <person name="Puigdomenech P."/>
            <person name="Watson M."/>
            <person name="Schmidtheini T."/>
            <person name="Reichert B."/>
            <person name="Portetelle D."/>
            <person name="Perez-Alonso M."/>
            <person name="Boutry M."/>
            <person name="Bancroft I."/>
            <person name="Vos P."/>
            <person name="Hoheisel J."/>
            <person name="Zimmermann W."/>
            <person name="Wedler H."/>
            <person name="Ridley P."/>
            <person name="Langham S.-A."/>
            <person name="McCullagh B."/>
            <person name="Bilham L."/>
            <person name="Robben J."/>
            <person name="van der Schueren J."/>
            <person name="Grymonprez B."/>
            <person name="Chuang Y.-J."/>
            <person name="Vandenbussche F."/>
            <person name="Braeken M."/>
            <person name="Weltjens I."/>
            <person name="Voet M."/>
            <person name="Bastiaens I."/>
            <person name="Aert R."/>
            <person name="Defoor E."/>
            <person name="Weitzenegger T."/>
            <person name="Bothe G."/>
            <person name="Ramsperger U."/>
            <person name="Hilbert H."/>
            <person name="Braun M."/>
            <person name="Holzer E."/>
            <person name="Brandt A."/>
            <person name="Peters S."/>
            <person name="van Staveren M."/>
            <person name="Dirkse W."/>
            <person name="Mooijman P."/>
            <person name="Klein Lankhorst R."/>
            <person name="Rose M."/>
            <person name="Hauf J."/>
            <person name="Koetter P."/>
            <person name="Berneiser S."/>
            <person name="Hempel S."/>
            <person name="Feldpausch M."/>
            <person name="Lamberth S."/>
            <person name="Van den Daele H."/>
            <person name="De Keyser A."/>
            <person name="Buysshaert C."/>
            <person name="Gielen J."/>
            <person name="Villarroel R."/>
            <person name="De Clercq R."/>
            <person name="van Montagu M."/>
            <person name="Rogers J."/>
            <person name="Cronin A."/>
            <person name="Quail M.A."/>
            <person name="Bray-Allen S."/>
            <person name="Clark L."/>
            <person name="Doggett J."/>
            <person name="Hall S."/>
            <person name="Kay M."/>
            <person name="Lennard N."/>
            <person name="McLay K."/>
            <person name="Mayes R."/>
            <person name="Pettett A."/>
            <person name="Rajandream M.A."/>
            <person name="Lyne M."/>
            <person name="Benes V."/>
            <person name="Rechmann S."/>
            <person name="Borkova D."/>
            <person name="Bloecker H."/>
            <person name="Scharfe M."/>
            <person name="Grimm M."/>
            <person name="Loehnert T.-H."/>
            <person name="Dose S."/>
            <person name="de Haan M."/>
            <person name="Maarse A.C."/>
            <person name="Schaefer M."/>
            <person name="Mueller-Auer S."/>
            <person name="Gabel C."/>
            <person name="Fuchs M."/>
            <person name="Fartmann B."/>
            <person name="Granderath K."/>
            <person name="Dauner D."/>
            <person name="Herzl A."/>
            <person name="Neumann S."/>
            <person name="Argiriou A."/>
            <person name="Vitale D."/>
            <person name="Liguori R."/>
            <person name="Piravandi E."/>
            <person name="Massenet O."/>
            <person name="Quigley F."/>
            <person name="Clabauld G."/>
            <person name="Muendlein A."/>
            <person name="Felber R."/>
            <person name="Schnabl S."/>
            <person name="Hiller R."/>
            <person name="Schmidt W."/>
            <person name="Lecharny A."/>
            <person name="Aubourg S."/>
            <person name="Chefdor F."/>
            <person name="Cooke R."/>
            <person name="Berger C."/>
            <person name="Monfort A."/>
            <person name="Casacuberta E."/>
            <person name="Gibbons T."/>
            <person name="Weber N."/>
            <person name="Vandenbol M."/>
            <person name="Bargues M."/>
            <person name="Terol J."/>
            <person name="Torres A."/>
            <person name="Perez-Perez A."/>
            <person name="Purnelle B."/>
            <person name="Bent E."/>
            <person name="Johnson S."/>
            <person name="Tacon D."/>
            <person name="Jesse T."/>
            <person name="Heijnen L."/>
            <person name="Schwarz S."/>
            <person name="Scholler P."/>
            <person name="Heber S."/>
            <person name="Francs P."/>
            <person name="Bielke C."/>
            <person name="Frishman D."/>
            <person name="Haase D."/>
            <person name="Lemcke K."/>
            <person name="Mewes H.-W."/>
            <person name="Stocker S."/>
            <person name="Zaccaria P."/>
            <person name="Bevan M."/>
            <person name="Wilson R.K."/>
            <person name="de la Bastide M."/>
            <person name="Habermann K."/>
            <person name="Parnell L."/>
            <person name="Dedhia N."/>
            <person name="Gnoj L."/>
            <person name="Schutz K."/>
            <person name="Huang E."/>
            <person name="Spiegel L."/>
            <person name="Sekhon M."/>
            <person name="Murray J."/>
            <person name="Sheet P."/>
            <person name="Cordes M."/>
            <person name="Abu-Threideh J."/>
            <person name="Stoneking T."/>
            <person name="Kalicki J."/>
            <person name="Graves T."/>
            <person name="Harmon G."/>
            <person name="Edwards J."/>
            <person name="Latreille P."/>
            <person name="Courtney L."/>
            <person name="Cloud J."/>
            <person name="Abbott A."/>
            <person name="Scott K."/>
            <person name="Johnson D."/>
            <person name="Minx P."/>
            <person name="Bentley D."/>
            <person name="Fulton B."/>
            <person name="Miller N."/>
            <person name="Greco T."/>
            <person name="Kemp K."/>
            <person name="Kramer J."/>
            <person name="Fulton L."/>
            <person name="Mardis E."/>
            <person name="Dante M."/>
            <person name="Pepin K."/>
            <person name="Hillier L.W."/>
            <person name="Nelson J."/>
            <person name="Spieth J."/>
            <person name="Ryan E."/>
            <person name="Andrews S."/>
            <person name="Geisel C."/>
            <person name="Layman D."/>
            <person name="Du H."/>
            <person name="Ali J."/>
            <person name="Berghoff A."/>
            <person name="Jones K."/>
            <person name="Drone K."/>
            <person name="Cotton M."/>
            <person name="Joshu C."/>
            <person name="Antonoiu B."/>
            <person name="Zidanic M."/>
            <person name="Strong C."/>
            <person name="Sun H."/>
            <person name="Lamar B."/>
            <person name="Yordan C."/>
            <person name="Ma P."/>
            <person name="Zhong J."/>
            <person name="Preston R."/>
            <person name="Vil D."/>
            <person name="Shekher M."/>
            <person name="Matero A."/>
            <person name="Shah R."/>
            <person name="Swaby I.K."/>
            <person name="O'Shaughnessy A."/>
            <person name="Rodriguez M."/>
            <person name="Hoffman J."/>
            <person name="Till S."/>
            <person name="Granat S."/>
            <person name="Shohdy N."/>
            <person name="Hasegawa A."/>
            <person name="Hameed A."/>
            <person name="Lodhi M."/>
            <person name="Johnson A."/>
            <person name="Chen E."/>
            <person name="Marra M.A."/>
            <person name="Martienssen R."/>
            <person name="McCombie W.R."/>
        </authorList>
    </citation>
    <scope>NUCLEOTIDE SEQUENCE [LARGE SCALE GENOMIC DNA]</scope>
    <source>
        <strain>cv. Columbia</strain>
    </source>
</reference>
<reference key="2">
    <citation type="journal article" date="2017" name="Plant J.">
        <title>Araport11: a complete reannotation of the Arabidopsis thaliana reference genome.</title>
        <authorList>
            <person name="Cheng C.Y."/>
            <person name="Krishnakumar V."/>
            <person name="Chan A.P."/>
            <person name="Thibaud-Nissen F."/>
            <person name="Schobel S."/>
            <person name="Town C.D."/>
        </authorList>
    </citation>
    <scope>GENOME REANNOTATION</scope>
    <source>
        <strain>cv. Columbia</strain>
    </source>
</reference>
<reference key="3">
    <citation type="journal article" date="2003" name="Science">
        <title>Empirical analysis of transcriptional activity in the Arabidopsis genome.</title>
        <authorList>
            <person name="Yamada K."/>
            <person name="Lim J."/>
            <person name="Dale J.M."/>
            <person name="Chen H."/>
            <person name="Shinn P."/>
            <person name="Palm C.J."/>
            <person name="Southwick A.M."/>
            <person name="Wu H.C."/>
            <person name="Kim C.J."/>
            <person name="Nguyen M."/>
            <person name="Pham P.K."/>
            <person name="Cheuk R.F."/>
            <person name="Karlin-Newmann G."/>
            <person name="Liu S.X."/>
            <person name="Lam B."/>
            <person name="Sakano H."/>
            <person name="Wu T."/>
            <person name="Yu G."/>
            <person name="Miranda M."/>
            <person name="Quach H.L."/>
            <person name="Tripp M."/>
            <person name="Chang C.H."/>
            <person name="Lee J.M."/>
            <person name="Toriumi M.J."/>
            <person name="Chan M.M."/>
            <person name="Tang C.C."/>
            <person name="Onodera C.S."/>
            <person name="Deng J.M."/>
            <person name="Akiyama K."/>
            <person name="Ansari Y."/>
            <person name="Arakawa T."/>
            <person name="Banh J."/>
            <person name="Banno F."/>
            <person name="Bowser L."/>
            <person name="Brooks S.Y."/>
            <person name="Carninci P."/>
            <person name="Chao Q."/>
            <person name="Choy N."/>
            <person name="Enju A."/>
            <person name="Goldsmith A.D."/>
            <person name="Gurjal M."/>
            <person name="Hansen N.F."/>
            <person name="Hayashizaki Y."/>
            <person name="Johnson-Hopson C."/>
            <person name="Hsuan V.W."/>
            <person name="Iida K."/>
            <person name="Karnes M."/>
            <person name="Khan S."/>
            <person name="Koesema E."/>
            <person name="Ishida J."/>
            <person name="Jiang P.X."/>
            <person name="Jones T."/>
            <person name="Kawai J."/>
            <person name="Kamiya A."/>
            <person name="Meyers C."/>
            <person name="Nakajima M."/>
            <person name="Narusaka M."/>
            <person name="Seki M."/>
            <person name="Sakurai T."/>
            <person name="Satou M."/>
            <person name="Tamse R."/>
            <person name="Vaysberg M."/>
            <person name="Wallender E.K."/>
            <person name="Wong C."/>
            <person name="Yamamura Y."/>
            <person name="Yuan S."/>
            <person name="Shinozaki K."/>
            <person name="Davis R.W."/>
            <person name="Theologis A."/>
            <person name="Ecker J.R."/>
        </authorList>
    </citation>
    <scope>NUCLEOTIDE SEQUENCE [LARGE SCALE MRNA] OF 69-241</scope>
    <source>
        <strain>cv. Columbia</strain>
    </source>
</reference>
<reference key="4">
    <citation type="journal article" date="2020" name="Int. J. Mol. Sci.">
        <title>Functional characterization of a putative RNA demethylase ALKBH6 in Arabidopsis growth and abiotic stress responses.</title>
        <authorList>
            <person name="Huong T.T."/>
            <person name="Ngoc L.N.T."/>
            <person name="Kang H."/>
        </authorList>
    </citation>
    <scope>FUNCTION</scope>
    <scope>DISRUPTION PHENOTYPE</scope>
    <scope>SUBCELLULAR LOCATION</scope>
    <scope>INDUCTION BY SALT STRESS AND COLD STRESS</scope>
    <source>
        <strain>cv. Columbia</strain>
    </source>
</reference>
<sequence>MELERFRVGLTPTVFYIPGFITDEEQTQLLNHIYGASGSKWKTLKNRRLQNWGGMVHEKGLVPQELPPWLTKITAEIHESSGLFPSAINHVLINEYHPDQGIMPHQDGPAYFPVVAILSLGSPVVMDFTPHLRLRSGDGYISKDQSPCAESCAPERDSFSVLLMPQSLLIFKDDAYSDFLHGISDSPTQCYNQVVNEAEALAYSNEEDSRKDGDKIFHRDQTRVSLTCRLVPKVRKNLFRF</sequence>
<gene>
    <name evidence="4" type="primary">ALKBH6</name>
    <name evidence="6" type="ordered locus">At4g20350</name>
    <name evidence="7" type="ORF">F9F13.6</name>
</gene>
<keyword id="KW-0938">Abscisic acid signaling pathway</keyword>
<keyword id="KW-0223">Dioxygenase</keyword>
<keyword id="KW-0408">Iron</keyword>
<keyword id="KW-0479">Metal-binding</keyword>
<keyword id="KW-0539">Nucleus</keyword>
<keyword id="KW-0560">Oxidoreductase</keyword>
<keyword id="KW-1185">Reference proteome</keyword>
<keyword id="KW-0694">RNA-binding</keyword>
<keyword id="KW-0346">Stress response</keyword>
<evidence type="ECO:0000250" key="1">
    <source>
        <dbReference type="UniProtKB" id="Q96BT7"/>
    </source>
</evidence>
<evidence type="ECO:0000255" key="2">
    <source>
        <dbReference type="PROSITE-ProRule" id="PRU00805"/>
    </source>
</evidence>
<evidence type="ECO:0000269" key="3">
    <source>
    </source>
</evidence>
<evidence type="ECO:0000303" key="4">
    <source>
    </source>
</evidence>
<evidence type="ECO:0000305" key="5"/>
<evidence type="ECO:0000312" key="6">
    <source>
        <dbReference type="Araport" id="AT4G20350"/>
    </source>
</evidence>
<evidence type="ECO:0000312" key="7">
    <source>
        <dbReference type="EMBL" id="CAB52823.1"/>
    </source>
</evidence>
<dbReference type="EC" id="1.14.11.-" evidence="2"/>
<dbReference type="EMBL" id="AL080253">
    <property type="protein sequence ID" value="CAB52823.1"/>
    <property type="molecule type" value="Genomic_DNA"/>
</dbReference>
<dbReference type="EMBL" id="AL161552">
    <property type="protein sequence ID" value="CAB79035.1"/>
    <property type="molecule type" value="Genomic_DNA"/>
</dbReference>
<dbReference type="EMBL" id="CP002687">
    <property type="protein sequence ID" value="AEE84312.1"/>
    <property type="molecule type" value="Genomic_DNA"/>
</dbReference>
<dbReference type="EMBL" id="CP002687">
    <property type="protein sequence ID" value="ANM66923.1"/>
    <property type="molecule type" value="Genomic_DNA"/>
</dbReference>
<dbReference type="EMBL" id="CP002687">
    <property type="protein sequence ID" value="ANM66930.1"/>
    <property type="status" value="ALT_SEQ"/>
    <property type="molecule type" value="Genomic_DNA"/>
</dbReference>
<dbReference type="EMBL" id="AF385737">
    <property type="protein sequence ID" value="AAK60327.1"/>
    <property type="status" value="ALT_INIT"/>
    <property type="molecule type" value="mRNA"/>
</dbReference>
<dbReference type="EMBL" id="AY093970">
    <property type="protein sequence ID" value="AAM16231.1"/>
    <property type="molecule type" value="mRNA"/>
</dbReference>
<dbReference type="PIR" id="A85231">
    <property type="entry name" value="A85231"/>
</dbReference>
<dbReference type="RefSeq" id="NP_001190780.1">
    <property type="nucleotide sequence ID" value="NM_001203851.2"/>
</dbReference>
<dbReference type="RefSeq" id="NP_001328788.1">
    <property type="nucleotide sequence ID" value="NM_001341432.1"/>
</dbReference>
<dbReference type="RefSeq" id="NP_001328794.1">
    <property type="nucleotide sequence ID" value="NM_001341428.1"/>
</dbReference>
<dbReference type="SMR" id="Q9SUP1"/>
<dbReference type="FunCoup" id="Q9SUP1">
    <property type="interactions" value="1522"/>
</dbReference>
<dbReference type="STRING" id="3702.Q9SUP1"/>
<dbReference type="PaxDb" id="3702-AT4G20350.2"/>
<dbReference type="DNASU" id="827783"/>
<dbReference type="EnsemblPlants" id="AT4G20350.2">
    <property type="protein sequence ID" value="AT4G20350.2"/>
    <property type="gene ID" value="AT4G20350"/>
</dbReference>
<dbReference type="EnsemblPlants" id="AT4G20350.6">
    <property type="protein sequence ID" value="AT4G20350.6"/>
    <property type="gene ID" value="AT4G20350"/>
</dbReference>
<dbReference type="GeneID" id="827783"/>
<dbReference type="Gramene" id="AT4G20350.2">
    <property type="protein sequence ID" value="AT4G20350.2"/>
    <property type="gene ID" value="AT4G20350"/>
</dbReference>
<dbReference type="Gramene" id="AT4G20350.6">
    <property type="protein sequence ID" value="AT4G20350.6"/>
    <property type="gene ID" value="AT4G20350"/>
</dbReference>
<dbReference type="KEGG" id="ath:AT4G20350"/>
<dbReference type="Araport" id="AT4G20350"/>
<dbReference type="TAIR" id="AT4G20350"/>
<dbReference type="eggNOG" id="KOG3200">
    <property type="taxonomic scope" value="Eukaryota"/>
</dbReference>
<dbReference type="HOGENOM" id="CLU_059836_1_1_1"/>
<dbReference type="InParanoid" id="Q9SUP1"/>
<dbReference type="OMA" id="KSPKTKW"/>
<dbReference type="PRO" id="PR:Q9SUP1"/>
<dbReference type="Proteomes" id="UP000006548">
    <property type="component" value="Chromosome 4"/>
</dbReference>
<dbReference type="ExpressionAtlas" id="Q9SUP1">
    <property type="expression patterns" value="baseline and differential"/>
</dbReference>
<dbReference type="GO" id="GO:0005634">
    <property type="term" value="C:nucleus"/>
    <property type="evidence" value="ECO:0000314"/>
    <property type="project" value="TAIR"/>
</dbReference>
<dbReference type="GO" id="GO:0062153">
    <property type="term" value="F:C5-methylcytidine-containing RNA reader activity"/>
    <property type="evidence" value="ECO:0000314"/>
    <property type="project" value="TAIR"/>
</dbReference>
<dbReference type="GO" id="GO:0051213">
    <property type="term" value="F:dioxygenase activity"/>
    <property type="evidence" value="ECO:0007669"/>
    <property type="project" value="UniProtKB-KW"/>
</dbReference>
<dbReference type="GO" id="GO:0046872">
    <property type="term" value="F:metal ion binding"/>
    <property type="evidence" value="ECO:0007669"/>
    <property type="project" value="UniProtKB-KW"/>
</dbReference>
<dbReference type="GO" id="GO:1990247">
    <property type="term" value="F:N6-methyladenosine-containing RNA reader activity"/>
    <property type="evidence" value="ECO:0000314"/>
    <property type="project" value="TAIR"/>
</dbReference>
<dbReference type="GO" id="GO:0003723">
    <property type="term" value="F:RNA binding"/>
    <property type="evidence" value="ECO:0007669"/>
    <property type="project" value="UniProtKB-KW"/>
</dbReference>
<dbReference type="GO" id="GO:0009738">
    <property type="term" value="P:abscisic acid-activated signaling pathway"/>
    <property type="evidence" value="ECO:0007669"/>
    <property type="project" value="UniProtKB-KW"/>
</dbReference>
<dbReference type="GO" id="GO:1905614">
    <property type="term" value="P:negative regulation of developmental vegetative growth"/>
    <property type="evidence" value="ECO:0000315"/>
    <property type="project" value="UniProtKB"/>
</dbReference>
<dbReference type="GO" id="GO:0010187">
    <property type="term" value="P:negative regulation of seed germination"/>
    <property type="evidence" value="ECO:0000315"/>
    <property type="project" value="UniProtKB"/>
</dbReference>
<dbReference type="GO" id="GO:1905615">
    <property type="term" value="P:positive regulation of developmental vegetative growth"/>
    <property type="evidence" value="ECO:0000315"/>
    <property type="project" value="UniProtKB"/>
</dbReference>
<dbReference type="GO" id="GO:1902584">
    <property type="term" value="P:positive regulation of response to water deprivation"/>
    <property type="evidence" value="ECO:0000315"/>
    <property type="project" value="UniProtKB"/>
</dbReference>
<dbReference type="GO" id="GO:0009737">
    <property type="term" value="P:response to abscisic acid"/>
    <property type="evidence" value="ECO:0000315"/>
    <property type="project" value="UniProtKB"/>
</dbReference>
<dbReference type="GO" id="GO:0009409">
    <property type="term" value="P:response to cold"/>
    <property type="evidence" value="ECO:0000315"/>
    <property type="project" value="UniProtKB"/>
</dbReference>
<dbReference type="GO" id="GO:0009408">
    <property type="term" value="P:response to heat"/>
    <property type="evidence" value="ECO:0000315"/>
    <property type="project" value="UniProtKB"/>
</dbReference>
<dbReference type="GO" id="GO:0009651">
    <property type="term" value="P:response to salt stress"/>
    <property type="evidence" value="ECO:0000315"/>
    <property type="project" value="UniProtKB"/>
</dbReference>
<dbReference type="Gene3D" id="2.60.120.590">
    <property type="entry name" value="Alpha-ketoglutarate-dependent dioxygenase AlkB-like"/>
    <property type="match status" value="1"/>
</dbReference>
<dbReference type="InterPro" id="IPR027450">
    <property type="entry name" value="AlkB-like"/>
</dbReference>
<dbReference type="InterPro" id="IPR037151">
    <property type="entry name" value="AlkB-like_sf"/>
</dbReference>
<dbReference type="InterPro" id="IPR032862">
    <property type="entry name" value="ALKBH6"/>
</dbReference>
<dbReference type="InterPro" id="IPR005123">
    <property type="entry name" value="Oxoglu/Fe-dep_dioxygenase_dom"/>
</dbReference>
<dbReference type="PANTHER" id="PTHR46030">
    <property type="entry name" value="ALPHA-KETOGLUTARATE-DEPENDENT DIOXYGENASE ALKB HOMOLOG 6"/>
    <property type="match status" value="1"/>
</dbReference>
<dbReference type="PANTHER" id="PTHR46030:SF1">
    <property type="entry name" value="ALPHA-KETOGLUTARATE-DEPENDENT DIOXYGENASE ALKB HOMOLOG 6"/>
    <property type="match status" value="1"/>
</dbReference>
<dbReference type="Pfam" id="PF13532">
    <property type="entry name" value="2OG-FeII_Oxy_2"/>
    <property type="match status" value="1"/>
</dbReference>
<dbReference type="SUPFAM" id="SSF51197">
    <property type="entry name" value="Clavaminate synthase-like"/>
    <property type="match status" value="1"/>
</dbReference>
<dbReference type="PROSITE" id="PS51471">
    <property type="entry name" value="FE2OG_OXY"/>
    <property type="match status" value="1"/>
</dbReference>
<feature type="chain" id="PRO_0000458226" description="Alkylated DNA repair protein ALKBH6 homolog">
    <location>
        <begin position="1"/>
        <end position="241"/>
    </location>
</feature>
<feature type="domain" description="Fe2OG dioxygenase" evidence="2">
    <location>
        <begin position="87"/>
        <end position="232"/>
    </location>
</feature>
<feature type="binding site" evidence="2">
    <location>
        <position position="105"/>
    </location>
    <ligand>
        <name>Fe cation</name>
        <dbReference type="ChEBI" id="CHEBI:24875"/>
    </ligand>
</feature>
<feature type="binding site" evidence="2">
    <location>
        <position position="107"/>
    </location>
    <ligand>
        <name>Fe cation</name>
        <dbReference type="ChEBI" id="CHEBI:24875"/>
    </ligand>
</feature>
<feature type="binding site" evidence="2">
    <location>
        <position position="181"/>
    </location>
    <ligand>
        <name>Fe cation</name>
        <dbReference type="ChEBI" id="CHEBI:24875"/>
    </ligand>
</feature>
<feature type="binding site" evidence="2">
    <location>
        <position position="223"/>
    </location>
    <ligand>
        <name>2-oxoglutarate</name>
        <dbReference type="ChEBI" id="CHEBI:16810"/>
    </ligand>
</feature>
<feature type="binding site" evidence="1">
    <location>
        <position position="229"/>
    </location>
    <ligand>
        <name>2-oxoglutarate</name>
        <dbReference type="ChEBI" id="CHEBI:16810"/>
    </ligand>
</feature>
<accession>Q9SUP1</accession>
<accession>Q94F42</accession>
<protein>
    <recommendedName>
        <fullName evidence="5">Alkylated DNA repair protein ALKBH6 homolog</fullName>
        <ecNumber evidence="2">1.14.11.-</ecNumber>
    </recommendedName>
    <alternativeName>
        <fullName evidence="5">Alpha-ketoglutarate-dependent dioxygenase B homolog 6</fullName>
        <shortName evidence="4">AtALKBH6</shortName>
        <shortName evidence="4">Protein ALKB HOMOLOG 6</shortName>
    </alternativeName>
</protein>
<organism>
    <name type="scientific">Arabidopsis thaliana</name>
    <name type="common">Mouse-ear cress</name>
    <dbReference type="NCBI Taxonomy" id="3702"/>
    <lineage>
        <taxon>Eukaryota</taxon>
        <taxon>Viridiplantae</taxon>
        <taxon>Streptophyta</taxon>
        <taxon>Embryophyta</taxon>
        <taxon>Tracheophyta</taxon>
        <taxon>Spermatophyta</taxon>
        <taxon>Magnoliopsida</taxon>
        <taxon>eudicotyledons</taxon>
        <taxon>Gunneridae</taxon>
        <taxon>Pentapetalae</taxon>
        <taxon>rosids</taxon>
        <taxon>malvids</taxon>
        <taxon>Brassicales</taxon>
        <taxon>Brassicaceae</taxon>
        <taxon>Camelineae</taxon>
        <taxon>Arabidopsis</taxon>
    </lineage>
</organism>
<proteinExistence type="evidence at transcript level"/>